<evidence type="ECO:0000255" key="1">
    <source>
        <dbReference type="HAMAP-Rule" id="MF_01033"/>
    </source>
</evidence>
<evidence type="ECO:0007829" key="2">
    <source>
        <dbReference type="PDB" id="3WZY"/>
    </source>
</evidence>
<gene>
    <name evidence="1" type="primary">leuB</name>
    <name type="ordered locus">SO_4235</name>
</gene>
<reference key="1">
    <citation type="journal article" date="2002" name="Nat. Biotechnol.">
        <title>Genome sequence of the dissimilatory metal ion-reducing bacterium Shewanella oneidensis.</title>
        <authorList>
            <person name="Heidelberg J.F."/>
            <person name="Paulsen I.T."/>
            <person name="Nelson K.E."/>
            <person name="Gaidos E.J."/>
            <person name="Nelson W.C."/>
            <person name="Read T.D."/>
            <person name="Eisen J.A."/>
            <person name="Seshadri R."/>
            <person name="Ward N.L."/>
            <person name="Methe B.A."/>
            <person name="Clayton R.A."/>
            <person name="Meyer T."/>
            <person name="Tsapin A."/>
            <person name="Scott J."/>
            <person name="Beanan M.J."/>
            <person name="Brinkac L.M."/>
            <person name="Daugherty S.C."/>
            <person name="DeBoy R.T."/>
            <person name="Dodson R.J."/>
            <person name="Durkin A.S."/>
            <person name="Haft D.H."/>
            <person name="Kolonay J.F."/>
            <person name="Madupu R."/>
            <person name="Peterson J.D."/>
            <person name="Umayam L.A."/>
            <person name="White O."/>
            <person name="Wolf A.M."/>
            <person name="Vamathevan J.J."/>
            <person name="Weidman J.F."/>
            <person name="Impraim M."/>
            <person name="Lee K."/>
            <person name="Berry K.J."/>
            <person name="Lee C."/>
            <person name="Mueller J."/>
            <person name="Khouri H.M."/>
            <person name="Gill J."/>
            <person name="Utterback T.R."/>
            <person name="McDonald L.A."/>
            <person name="Feldblyum T.V."/>
            <person name="Smith H.O."/>
            <person name="Venter J.C."/>
            <person name="Nealson K.H."/>
            <person name="Fraser C.M."/>
        </authorList>
    </citation>
    <scope>NUCLEOTIDE SEQUENCE [LARGE SCALE GENOMIC DNA]</scope>
    <source>
        <strain>ATCC 700550 / JCM 31522 / CIP 106686 / LMG 19005 / NCIMB 14063 / MR-1</strain>
    </source>
</reference>
<organism>
    <name type="scientific">Shewanella oneidensis (strain ATCC 700550 / JCM 31522 / CIP 106686 / LMG 19005 / NCIMB 14063 / MR-1)</name>
    <dbReference type="NCBI Taxonomy" id="211586"/>
    <lineage>
        <taxon>Bacteria</taxon>
        <taxon>Pseudomonadati</taxon>
        <taxon>Pseudomonadota</taxon>
        <taxon>Gammaproteobacteria</taxon>
        <taxon>Alteromonadales</taxon>
        <taxon>Shewanellaceae</taxon>
        <taxon>Shewanella</taxon>
    </lineage>
</organism>
<sequence length="364" mass="39368">MSYQIAVLAGDGIGPEVMAEARKVLKAVEARFGLNIEYTEYDVGGIAIDNHGCPLPEATLKGCEAADAILFGSVGGPKWEKLPPNEQPERGALLPLRGHFELFCNLRPAKLHDGLEHMSPLRSDISARGFDVLCVRELTGGIYFGKPKGRQGEGESEEAFDTMRYSRREISRIARIAFEAARGRRKKVTSVDKANVLACSVLWRQVVEEVAVDFPDVELEHIYIDNATMQLLRRPDEFDVMLCSNLFGDILSDEIAMLTGSMGLLSSASMNSTGFGLFEPAGGSAPDIAGKGIANPIAQILSAALMLRHSLKQEEAASAIERAVTKALNSGYLTGELLSSDQRHKAKTTVQMGDFIADAVKAGV</sequence>
<name>LEU3_SHEON</name>
<dbReference type="EC" id="1.1.1.85" evidence="1"/>
<dbReference type="EMBL" id="AE014299">
    <property type="protein sequence ID" value="AAN57206.1"/>
    <property type="molecule type" value="Genomic_DNA"/>
</dbReference>
<dbReference type="RefSeq" id="NP_719762.1">
    <property type="nucleotide sequence ID" value="NC_004347.2"/>
</dbReference>
<dbReference type="RefSeq" id="WP_011073915.1">
    <property type="nucleotide sequence ID" value="NZ_CP053946.1"/>
</dbReference>
<dbReference type="PDB" id="3VKZ">
    <property type="method" value="X-ray"/>
    <property type="resolution" value="1.84 A"/>
    <property type="chains" value="A=2-364"/>
</dbReference>
<dbReference type="PDB" id="3VL2">
    <property type="method" value="X-ray"/>
    <property type="resolution" value="2.06 A"/>
    <property type="chains" value="A=2-364"/>
</dbReference>
<dbReference type="PDB" id="3VL3">
    <property type="method" value="X-ray"/>
    <property type="resolution" value="1.80 A"/>
    <property type="chains" value="A=2-364"/>
</dbReference>
<dbReference type="PDB" id="3VL4">
    <property type="method" value="X-ray"/>
    <property type="resolution" value="1.88 A"/>
    <property type="chains" value="A=2-364"/>
</dbReference>
<dbReference type="PDB" id="3VL6">
    <property type="method" value="X-ray"/>
    <property type="resolution" value="2.07 A"/>
    <property type="chains" value="A=2-364"/>
</dbReference>
<dbReference type="PDB" id="3VL7">
    <property type="method" value="X-ray"/>
    <property type="resolution" value="2.20 A"/>
    <property type="chains" value="A=2-364"/>
</dbReference>
<dbReference type="PDB" id="3VMJ">
    <property type="method" value="X-ray"/>
    <property type="resolution" value="1.56 A"/>
    <property type="chains" value="A=2-364"/>
</dbReference>
<dbReference type="PDB" id="3VML">
    <property type="method" value="X-ray"/>
    <property type="resolution" value="1.56 A"/>
    <property type="chains" value="A=2-68, A=329-364"/>
</dbReference>
<dbReference type="PDB" id="3WZV">
    <property type="method" value="X-ray"/>
    <property type="resolution" value="1.90 A"/>
    <property type="chains" value="A=2-364"/>
</dbReference>
<dbReference type="PDB" id="3WZW">
    <property type="method" value="X-ray"/>
    <property type="resolution" value="1.80 A"/>
    <property type="chains" value="A=2-364"/>
</dbReference>
<dbReference type="PDB" id="3WZX">
    <property type="method" value="X-ray"/>
    <property type="resolution" value="1.90 A"/>
    <property type="chains" value="A=2-364"/>
</dbReference>
<dbReference type="PDB" id="3WZY">
    <property type="method" value="X-ray"/>
    <property type="resolution" value="1.55 A"/>
    <property type="chains" value="A=2-364"/>
</dbReference>
<dbReference type="PDBsum" id="3VKZ"/>
<dbReference type="PDBsum" id="3VL2"/>
<dbReference type="PDBsum" id="3VL3"/>
<dbReference type="PDBsum" id="3VL4"/>
<dbReference type="PDBsum" id="3VL6"/>
<dbReference type="PDBsum" id="3VL7"/>
<dbReference type="PDBsum" id="3VMJ"/>
<dbReference type="PDBsum" id="3VML"/>
<dbReference type="PDBsum" id="3WZV"/>
<dbReference type="PDBsum" id="3WZW"/>
<dbReference type="PDBsum" id="3WZX"/>
<dbReference type="PDBsum" id="3WZY"/>
<dbReference type="SMR" id="Q8E9N3"/>
<dbReference type="STRING" id="211586.SO_4235"/>
<dbReference type="PaxDb" id="211586-SO_4235"/>
<dbReference type="KEGG" id="son:SO_4235"/>
<dbReference type="PATRIC" id="fig|211586.12.peg.4094"/>
<dbReference type="eggNOG" id="COG0473">
    <property type="taxonomic scope" value="Bacteria"/>
</dbReference>
<dbReference type="HOGENOM" id="CLU_031953_0_3_6"/>
<dbReference type="OrthoDB" id="9767905at2"/>
<dbReference type="PhylomeDB" id="Q8E9N3"/>
<dbReference type="BioCyc" id="SONE211586:G1GMP-3912-MONOMER"/>
<dbReference type="BRENDA" id="1.1.1.85">
    <property type="organism ID" value="5706"/>
</dbReference>
<dbReference type="UniPathway" id="UPA00048">
    <property type="reaction ID" value="UER00072"/>
</dbReference>
<dbReference type="EvolutionaryTrace" id="Q8E9N3"/>
<dbReference type="Proteomes" id="UP000008186">
    <property type="component" value="Chromosome"/>
</dbReference>
<dbReference type="GO" id="GO:0005829">
    <property type="term" value="C:cytosol"/>
    <property type="evidence" value="ECO:0000318"/>
    <property type="project" value="GO_Central"/>
</dbReference>
<dbReference type="GO" id="GO:0003862">
    <property type="term" value="F:3-isopropylmalate dehydrogenase activity"/>
    <property type="evidence" value="ECO:0000318"/>
    <property type="project" value="GO_Central"/>
</dbReference>
<dbReference type="GO" id="GO:0000287">
    <property type="term" value="F:magnesium ion binding"/>
    <property type="evidence" value="ECO:0007669"/>
    <property type="project" value="InterPro"/>
</dbReference>
<dbReference type="GO" id="GO:0051287">
    <property type="term" value="F:NAD binding"/>
    <property type="evidence" value="ECO:0007669"/>
    <property type="project" value="InterPro"/>
</dbReference>
<dbReference type="GO" id="GO:0009098">
    <property type="term" value="P:L-leucine biosynthetic process"/>
    <property type="evidence" value="ECO:0000318"/>
    <property type="project" value="GO_Central"/>
</dbReference>
<dbReference type="FunFam" id="3.40.718.10:FF:000004">
    <property type="entry name" value="3-isopropylmalate dehydrogenase"/>
    <property type="match status" value="1"/>
</dbReference>
<dbReference type="Gene3D" id="3.40.718.10">
    <property type="entry name" value="Isopropylmalate Dehydrogenase"/>
    <property type="match status" value="1"/>
</dbReference>
<dbReference type="HAMAP" id="MF_01033">
    <property type="entry name" value="LeuB_type1"/>
    <property type="match status" value="1"/>
</dbReference>
<dbReference type="InterPro" id="IPR019818">
    <property type="entry name" value="IsoCit/isopropylmalate_DH_CS"/>
</dbReference>
<dbReference type="InterPro" id="IPR024084">
    <property type="entry name" value="IsoPropMal-DH-like_dom"/>
</dbReference>
<dbReference type="InterPro" id="IPR004429">
    <property type="entry name" value="Isopropylmalate_DH"/>
</dbReference>
<dbReference type="NCBIfam" id="TIGR00169">
    <property type="entry name" value="leuB"/>
    <property type="match status" value="1"/>
</dbReference>
<dbReference type="PANTHER" id="PTHR42979">
    <property type="entry name" value="3-ISOPROPYLMALATE DEHYDROGENASE"/>
    <property type="match status" value="1"/>
</dbReference>
<dbReference type="PANTHER" id="PTHR42979:SF1">
    <property type="entry name" value="3-ISOPROPYLMALATE DEHYDROGENASE"/>
    <property type="match status" value="1"/>
</dbReference>
<dbReference type="Pfam" id="PF00180">
    <property type="entry name" value="Iso_dh"/>
    <property type="match status" value="1"/>
</dbReference>
<dbReference type="SMART" id="SM01329">
    <property type="entry name" value="Iso_dh"/>
    <property type="match status" value="1"/>
</dbReference>
<dbReference type="SUPFAM" id="SSF53659">
    <property type="entry name" value="Isocitrate/Isopropylmalate dehydrogenase-like"/>
    <property type="match status" value="1"/>
</dbReference>
<dbReference type="PROSITE" id="PS00470">
    <property type="entry name" value="IDH_IMDH"/>
    <property type="match status" value="1"/>
</dbReference>
<feature type="chain" id="PRO_0000083744" description="3-isopropylmalate dehydrogenase">
    <location>
        <begin position="1"/>
        <end position="364"/>
    </location>
</feature>
<feature type="binding site" evidence="1">
    <location>
        <begin position="76"/>
        <end position="89"/>
    </location>
    <ligand>
        <name>NAD(+)</name>
        <dbReference type="ChEBI" id="CHEBI:57540"/>
    </ligand>
</feature>
<feature type="binding site" evidence="1">
    <location>
        <position position="97"/>
    </location>
    <ligand>
        <name>substrate</name>
    </ligand>
</feature>
<feature type="binding site" evidence="1">
    <location>
        <position position="107"/>
    </location>
    <ligand>
        <name>substrate</name>
    </ligand>
</feature>
<feature type="binding site" evidence="1">
    <location>
        <position position="136"/>
    </location>
    <ligand>
        <name>substrate</name>
    </ligand>
</feature>
<feature type="binding site" evidence="1">
    <location>
        <position position="225"/>
    </location>
    <ligand>
        <name>Mg(2+)</name>
        <dbReference type="ChEBI" id="CHEBI:18420"/>
    </ligand>
</feature>
<feature type="binding site" evidence="1">
    <location>
        <position position="225"/>
    </location>
    <ligand>
        <name>substrate</name>
    </ligand>
</feature>
<feature type="binding site" evidence="1">
    <location>
        <position position="249"/>
    </location>
    <ligand>
        <name>Mg(2+)</name>
        <dbReference type="ChEBI" id="CHEBI:18420"/>
    </ligand>
</feature>
<feature type="binding site" evidence="1">
    <location>
        <position position="253"/>
    </location>
    <ligand>
        <name>Mg(2+)</name>
        <dbReference type="ChEBI" id="CHEBI:18420"/>
    </ligand>
</feature>
<feature type="binding site" evidence="1">
    <location>
        <begin position="283"/>
        <end position="295"/>
    </location>
    <ligand>
        <name>NAD(+)</name>
        <dbReference type="ChEBI" id="CHEBI:57540"/>
    </ligand>
</feature>
<feature type="site" description="Important for catalysis" evidence="1">
    <location>
        <position position="143"/>
    </location>
</feature>
<feature type="site" description="Important for catalysis" evidence="1">
    <location>
        <position position="193"/>
    </location>
</feature>
<feature type="strand" evidence="2">
    <location>
        <begin position="3"/>
        <end position="11"/>
    </location>
</feature>
<feature type="helix" evidence="2">
    <location>
        <begin position="14"/>
        <end position="32"/>
    </location>
</feature>
<feature type="strand" evidence="2">
    <location>
        <begin position="36"/>
        <end position="40"/>
    </location>
</feature>
<feature type="helix" evidence="2">
    <location>
        <begin position="45"/>
        <end position="51"/>
    </location>
</feature>
<feature type="strand" evidence="2">
    <location>
        <begin position="52"/>
        <end position="55"/>
    </location>
</feature>
<feature type="helix" evidence="2">
    <location>
        <begin position="57"/>
        <end position="64"/>
    </location>
</feature>
<feature type="strand" evidence="2">
    <location>
        <begin position="66"/>
        <end position="73"/>
    </location>
</feature>
<feature type="helix" evidence="2">
    <location>
        <begin position="77"/>
        <end position="79"/>
    </location>
</feature>
<feature type="helix" evidence="2">
    <location>
        <begin position="84"/>
        <end position="86"/>
    </location>
</feature>
<feature type="helix" evidence="2">
    <location>
        <begin position="88"/>
        <end position="99"/>
    </location>
</feature>
<feature type="strand" evidence="2">
    <location>
        <begin position="104"/>
        <end position="110"/>
    </location>
</feature>
<feature type="helix" evidence="2">
    <location>
        <begin position="116"/>
        <end position="118"/>
    </location>
</feature>
<feature type="strand" evidence="2">
    <location>
        <begin position="119"/>
        <end position="121"/>
    </location>
</feature>
<feature type="helix" evidence="2">
    <location>
        <begin position="123"/>
        <end position="128"/>
    </location>
</feature>
<feature type="strand" evidence="2">
    <location>
        <begin position="131"/>
        <end position="137"/>
    </location>
</feature>
<feature type="strand" evidence="2">
    <location>
        <begin position="139"/>
        <end position="141"/>
    </location>
</feature>
<feature type="turn" evidence="2">
    <location>
        <begin position="142"/>
        <end position="144"/>
    </location>
</feature>
<feature type="strand" evidence="2">
    <location>
        <begin position="149"/>
        <end position="151"/>
    </location>
</feature>
<feature type="helix" evidence="2">
    <location>
        <begin position="154"/>
        <end position="156"/>
    </location>
</feature>
<feature type="strand" evidence="2">
    <location>
        <begin position="158"/>
        <end position="160"/>
    </location>
</feature>
<feature type="helix" evidence="2">
    <location>
        <begin position="167"/>
        <end position="182"/>
    </location>
</feature>
<feature type="turn" evidence="2">
    <location>
        <begin position="183"/>
        <end position="185"/>
    </location>
</feature>
<feature type="strand" evidence="2">
    <location>
        <begin position="186"/>
        <end position="192"/>
    </location>
</feature>
<feature type="turn" evidence="2">
    <location>
        <begin position="194"/>
        <end position="196"/>
    </location>
</feature>
<feature type="helix" evidence="2">
    <location>
        <begin position="198"/>
        <end position="210"/>
    </location>
</feature>
<feature type="helix" evidence="2">
    <location>
        <begin position="211"/>
        <end position="213"/>
    </location>
</feature>
<feature type="strand" evidence="2">
    <location>
        <begin position="217"/>
        <end position="223"/>
    </location>
</feature>
<feature type="helix" evidence="2">
    <location>
        <begin position="224"/>
        <end position="233"/>
    </location>
</feature>
<feature type="helix" evidence="2">
    <location>
        <begin position="235"/>
        <end position="237"/>
    </location>
</feature>
<feature type="strand" evidence="2">
    <location>
        <begin position="239"/>
        <end position="243"/>
    </location>
</feature>
<feature type="helix" evidence="2">
    <location>
        <begin position="245"/>
        <end position="259"/>
    </location>
</feature>
<feature type="helix" evidence="2">
    <location>
        <begin position="262"/>
        <end position="264"/>
    </location>
</feature>
<feature type="strand" evidence="2">
    <location>
        <begin position="266"/>
        <end position="270"/>
    </location>
</feature>
<feature type="strand" evidence="2">
    <location>
        <begin position="276"/>
        <end position="282"/>
    </location>
</feature>
<feature type="turn" evidence="2">
    <location>
        <begin position="286"/>
        <end position="290"/>
    </location>
</feature>
<feature type="helix" evidence="2">
    <location>
        <begin position="297"/>
        <end position="309"/>
    </location>
</feature>
<feature type="helix" evidence="2">
    <location>
        <begin position="314"/>
        <end position="329"/>
    </location>
</feature>
<feature type="helix" evidence="2">
    <location>
        <begin position="335"/>
        <end position="337"/>
    </location>
</feature>
<feature type="helix" evidence="2">
    <location>
        <begin position="340"/>
        <end position="345"/>
    </location>
</feature>
<feature type="helix" evidence="2">
    <location>
        <begin position="349"/>
        <end position="361"/>
    </location>
</feature>
<protein>
    <recommendedName>
        <fullName evidence="1">3-isopropylmalate dehydrogenase</fullName>
        <ecNumber evidence="1">1.1.1.85</ecNumber>
    </recommendedName>
    <alternativeName>
        <fullName evidence="1">3-IPM-DH</fullName>
    </alternativeName>
    <alternativeName>
        <fullName evidence="1">Beta-IPM dehydrogenase</fullName>
        <shortName evidence="1">IMDH</shortName>
    </alternativeName>
</protein>
<proteinExistence type="evidence at protein level"/>
<keyword id="KW-0002">3D-structure</keyword>
<keyword id="KW-0028">Amino-acid biosynthesis</keyword>
<keyword id="KW-0100">Branched-chain amino acid biosynthesis</keyword>
<keyword id="KW-0963">Cytoplasm</keyword>
<keyword id="KW-0432">Leucine biosynthesis</keyword>
<keyword id="KW-0460">Magnesium</keyword>
<keyword id="KW-0464">Manganese</keyword>
<keyword id="KW-0479">Metal-binding</keyword>
<keyword id="KW-0520">NAD</keyword>
<keyword id="KW-0560">Oxidoreductase</keyword>
<keyword id="KW-1185">Reference proteome</keyword>
<accession>Q8E9N3</accession>
<comment type="function">
    <text>Catalyzes the oxidation of 3-carboxy-2-hydroxy-4-methylpentanoate (3-isopropylmalate) to 3-carboxy-4-methyl-2-oxopentanoate. The product decarboxylates to 4-methyl-2 oxopentanoate.</text>
</comment>
<comment type="catalytic activity">
    <reaction evidence="1">
        <text>(2R,3S)-3-isopropylmalate + NAD(+) = 4-methyl-2-oxopentanoate + CO2 + NADH</text>
        <dbReference type="Rhea" id="RHEA:32271"/>
        <dbReference type="ChEBI" id="CHEBI:16526"/>
        <dbReference type="ChEBI" id="CHEBI:17865"/>
        <dbReference type="ChEBI" id="CHEBI:35121"/>
        <dbReference type="ChEBI" id="CHEBI:57540"/>
        <dbReference type="ChEBI" id="CHEBI:57945"/>
        <dbReference type="EC" id="1.1.1.85"/>
    </reaction>
</comment>
<comment type="cofactor">
    <cofactor evidence="1">
        <name>Mg(2+)</name>
        <dbReference type="ChEBI" id="CHEBI:18420"/>
    </cofactor>
    <cofactor evidence="1">
        <name>Mn(2+)</name>
        <dbReference type="ChEBI" id="CHEBI:29035"/>
    </cofactor>
    <text evidence="1">Binds 1 Mg(2+) or Mn(2+) ion per subunit.</text>
</comment>
<comment type="pathway">
    <text evidence="1">Amino-acid biosynthesis; L-leucine biosynthesis; L-leucine from 3-methyl-2-oxobutanoate: step 3/4.</text>
</comment>
<comment type="subunit">
    <text evidence="1">Homodimer.</text>
</comment>
<comment type="subcellular location">
    <subcellularLocation>
        <location evidence="1">Cytoplasm</location>
    </subcellularLocation>
</comment>
<comment type="similarity">
    <text evidence="1">Belongs to the isocitrate and isopropylmalate dehydrogenases family. LeuB type 1 subfamily.</text>
</comment>